<feature type="chain" id="PRO_1000005832" description="Probable GTP-binding protein EngB">
    <location>
        <begin position="1"/>
        <end position="227"/>
    </location>
</feature>
<feature type="domain" description="EngB-type G" evidence="1">
    <location>
        <begin position="30"/>
        <end position="219"/>
    </location>
</feature>
<feature type="binding site" evidence="1">
    <location>
        <begin position="38"/>
        <end position="45"/>
    </location>
    <ligand>
        <name>GTP</name>
        <dbReference type="ChEBI" id="CHEBI:37565"/>
    </ligand>
</feature>
<feature type="binding site" evidence="1">
    <location>
        <position position="45"/>
    </location>
    <ligand>
        <name>Mg(2+)</name>
        <dbReference type="ChEBI" id="CHEBI:18420"/>
    </ligand>
</feature>
<feature type="binding site" evidence="1">
    <location>
        <begin position="63"/>
        <end position="67"/>
    </location>
    <ligand>
        <name>GTP</name>
        <dbReference type="ChEBI" id="CHEBI:37565"/>
    </ligand>
</feature>
<feature type="binding site" evidence="1">
    <location>
        <position position="65"/>
    </location>
    <ligand>
        <name>Mg(2+)</name>
        <dbReference type="ChEBI" id="CHEBI:18420"/>
    </ligand>
</feature>
<feature type="binding site" evidence="1">
    <location>
        <begin position="80"/>
        <end position="83"/>
    </location>
    <ligand>
        <name>GTP</name>
        <dbReference type="ChEBI" id="CHEBI:37565"/>
    </ligand>
</feature>
<feature type="binding site" evidence="1">
    <location>
        <begin position="160"/>
        <end position="163"/>
    </location>
    <ligand>
        <name>GTP</name>
        <dbReference type="ChEBI" id="CHEBI:37565"/>
    </ligand>
</feature>
<feature type="binding site" evidence="1">
    <location>
        <begin position="197"/>
        <end position="199"/>
    </location>
    <ligand>
        <name>GTP</name>
        <dbReference type="ChEBI" id="CHEBI:37565"/>
    </ligand>
</feature>
<reference key="1">
    <citation type="submission" date="2007-06" db="EMBL/GenBank/DDBJ databases">
        <title>Complete sequence of Methanococcus aeolicus Nankai-3.</title>
        <authorList>
            <consortium name="US DOE Joint Genome Institute"/>
            <person name="Copeland A."/>
            <person name="Lucas S."/>
            <person name="Lapidus A."/>
            <person name="Barry K."/>
            <person name="Glavina del Rio T."/>
            <person name="Dalin E."/>
            <person name="Tice H."/>
            <person name="Pitluck S."/>
            <person name="Chain P."/>
            <person name="Malfatti S."/>
            <person name="Shin M."/>
            <person name="Vergez L."/>
            <person name="Schmutz J."/>
            <person name="Larimer F."/>
            <person name="Land M."/>
            <person name="Hauser L."/>
            <person name="Kyrpides N."/>
            <person name="Lykidis A."/>
            <person name="Sieprawska-Lupa M."/>
            <person name="Whitman W.B."/>
            <person name="Richardson P."/>
        </authorList>
    </citation>
    <scope>NUCLEOTIDE SEQUENCE [LARGE SCALE GENOMIC DNA]</scope>
    <source>
        <strain>ATCC BAA-1280 / DSM 17508 / OCM 812 / Nankai-3</strain>
    </source>
</reference>
<accession>A6USY3</accession>
<proteinExistence type="inferred from homology"/>
<protein>
    <recommendedName>
        <fullName evidence="1">Probable GTP-binding protein EngB</fullName>
    </recommendedName>
</protein>
<organism>
    <name type="scientific">Methanococcus aeolicus (strain ATCC BAA-1280 / DSM 17508 / OCM 812 / Nankai-3)</name>
    <dbReference type="NCBI Taxonomy" id="419665"/>
    <lineage>
        <taxon>Archaea</taxon>
        <taxon>Methanobacteriati</taxon>
        <taxon>Methanobacteriota</taxon>
        <taxon>Methanomada group</taxon>
        <taxon>Methanococci</taxon>
        <taxon>Methanococcales</taxon>
        <taxon>Methanococcaceae</taxon>
        <taxon>Methanococcus</taxon>
    </lineage>
</organism>
<name>ENGB_META3</name>
<sequence length="227" mass="26181">MNEETNNEFKKNLEKFKKMAKRGKETKMDKKPQIIVVGRSNVGKSTLVRLITKKDVRVGKKPGVTLKINKYDVGNFILVDLPGFGFMTGLEEKVQNKIKKEIVQYIEDNKDQIVGSIILIDVKAFPGIVERWDSKDEIPIDIEMFEFLEELELNPSIFINKMDKIKKNDQDKTLDKIVAIFGCPAPWRQWINDIITIGILKEGIGLNEVMVKINKNVNEYNRVKNKK</sequence>
<keyword id="KW-0131">Cell cycle</keyword>
<keyword id="KW-0132">Cell division</keyword>
<keyword id="KW-0342">GTP-binding</keyword>
<keyword id="KW-0460">Magnesium</keyword>
<keyword id="KW-0479">Metal-binding</keyword>
<keyword id="KW-0547">Nucleotide-binding</keyword>
<keyword id="KW-0717">Septation</keyword>
<evidence type="ECO:0000255" key="1">
    <source>
        <dbReference type="HAMAP-Rule" id="MF_00321"/>
    </source>
</evidence>
<dbReference type="EMBL" id="CP000743">
    <property type="protein sequence ID" value="ABR55605.1"/>
    <property type="molecule type" value="Genomic_DNA"/>
</dbReference>
<dbReference type="RefSeq" id="WP_011972737.1">
    <property type="nucleotide sequence ID" value="NC_009635.1"/>
</dbReference>
<dbReference type="SMR" id="A6USY3"/>
<dbReference type="STRING" id="419665.Maeo_0012"/>
<dbReference type="GeneID" id="5327102"/>
<dbReference type="GeneID" id="75305018"/>
<dbReference type="KEGG" id="mae:Maeo_0012"/>
<dbReference type="eggNOG" id="arCOG00355">
    <property type="taxonomic scope" value="Archaea"/>
</dbReference>
<dbReference type="HOGENOM" id="CLU_033732_3_0_2"/>
<dbReference type="OrthoDB" id="65113at2157"/>
<dbReference type="Proteomes" id="UP000001106">
    <property type="component" value="Chromosome"/>
</dbReference>
<dbReference type="GO" id="GO:0005525">
    <property type="term" value="F:GTP binding"/>
    <property type="evidence" value="ECO:0007669"/>
    <property type="project" value="UniProtKB-UniRule"/>
</dbReference>
<dbReference type="GO" id="GO:0046872">
    <property type="term" value="F:metal ion binding"/>
    <property type="evidence" value="ECO:0007669"/>
    <property type="project" value="UniProtKB-KW"/>
</dbReference>
<dbReference type="GO" id="GO:0051301">
    <property type="term" value="P:cell division"/>
    <property type="evidence" value="ECO:0007669"/>
    <property type="project" value="UniProtKB-KW"/>
</dbReference>
<dbReference type="Gene3D" id="3.40.50.300">
    <property type="entry name" value="P-loop containing nucleotide triphosphate hydrolases"/>
    <property type="match status" value="1"/>
</dbReference>
<dbReference type="HAMAP" id="MF_00321">
    <property type="entry name" value="GTPase_EngB"/>
    <property type="match status" value="1"/>
</dbReference>
<dbReference type="InterPro" id="IPR030393">
    <property type="entry name" value="G_ENGB_dom"/>
</dbReference>
<dbReference type="InterPro" id="IPR006073">
    <property type="entry name" value="GTP-bd"/>
</dbReference>
<dbReference type="InterPro" id="IPR019987">
    <property type="entry name" value="GTP-bd_ribosome_bio_YsxC"/>
</dbReference>
<dbReference type="InterPro" id="IPR027417">
    <property type="entry name" value="P-loop_NTPase"/>
</dbReference>
<dbReference type="NCBIfam" id="NF003255">
    <property type="entry name" value="PRK04213.1"/>
    <property type="match status" value="1"/>
</dbReference>
<dbReference type="PANTHER" id="PTHR11649:SF13">
    <property type="entry name" value="ENGB-TYPE G DOMAIN-CONTAINING PROTEIN"/>
    <property type="match status" value="1"/>
</dbReference>
<dbReference type="PANTHER" id="PTHR11649">
    <property type="entry name" value="MSS1/TRME-RELATED GTP-BINDING PROTEIN"/>
    <property type="match status" value="1"/>
</dbReference>
<dbReference type="Pfam" id="PF01926">
    <property type="entry name" value="MMR_HSR1"/>
    <property type="match status" value="1"/>
</dbReference>
<dbReference type="SUPFAM" id="SSF52540">
    <property type="entry name" value="P-loop containing nucleoside triphosphate hydrolases"/>
    <property type="match status" value="1"/>
</dbReference>
<dbReference type="PROSITE" id="PS51706">
    <property type="entry name" value="G_ENGB"/>
    <property type="match status" value="1"/>
</dbReference>
<gene>
    <name evidence="1" type="primary">engB</name>
    <name type="ordered locus">Maeo_0012</name>
</gene>
<comment type="function">
    <text evidence="1">Necessary for normal cell division and for the maintenance of normal septation.</text>
</comment>
<comment type="cofactor">
    <cofactor evidence="1">
        <name>Mg(2+)</name>
        <dbReference type="ChEBI" id="CHEBI:18420"/>
    </cofactor>
</comment>
<comment type="similarity">
    <text evidence="1">Belongs to the TRAFAC class TrmE-Era-EngA-EngB-Septin-like GTPase superfamily. EngB GTPase family.</text>
</comment>